<feature type="chain" id="PRO_1000083787" description="ATP synthase gamma chain">
    <location>
        <begin position="1"/>
        <end position="298"/>
    </location>
</feature>
<comment type="function">
    <text evidence="1">Produces ATP from ADP in the presence of a proton gradient across the membrane. The gamma chain is believed to be important in regulating ATPase activity and the flow of protons through the CF(0) complex.</text>
</comment>
<comment type="subunit">
    <text evidence="1">F-type ATPases have 2 components, CF(1) - the catalytic core - and CF(0) - the membrane proton channel. CF(1) has five subunits: alpha(3), beta(3), gamma(1), delta(1), epsilon(1). CF(0) has three main subunits: a, b and c.</text>
</comment>
<comment type="subcellular location">
    <subcellularLocation>
        <location evidence="1">Cell inner membrane</location>
        <topology evidence="1">Peripheral membrane protein</topology>
    </subcellularLocation>
</comment>
<comment type="similarity">
    <text evidence="1">Belongs to the ATPase gamma chain family.</text>
</comment>
<organism>
    <name type="scientific">Francisella philomiragia subsp. philomiragia (strain ATCC 25017 / CCUG 19701 / FSC 153 / O#319-036)</name>
    <dbReference type="NCBI Taxonomy" id="484022"/>
    <lineage>
        <taxon>Bacteria</taxon>
        <taxon>Pseudomonadati</taxon>
        <taxon>Pseudomonadota</taxon>
        <taxon>Gammaproteobacteria</taxon>
        <taxon>Thiotrichales</taxon>
        <taxon>Francisellaceae</taxon>
        <taxon>Francisella</taxon>
    </lineage>
</organism>
<gene>
    <name evidence="1" type="primary">atpG</name>
    <name type="ordered locus">Fphi_0961</name>
</gene>
<dbReference type="EMBL" id="CP000937">
    <property type="protein sequence ID" value="ABZ87184.1"/>
    <property type="molecule type" value="Genomic_DNA"/>
</dbReference>
<dbReference type="SMR" id="B0TWS6"/>
<dbReference type="KEGG" id="fph:Fphi_0961"/>
<dbReference type="eggNOG" id="COG0224">
    <property type="taxonomic scope" value="Bacteria"/>
</dbReference>
<dbReference type="HOGENOM" id="CLU_050669_0_1_6"/>
<dbReference type="GO" id="GO:0005886">
    <property type="term" value="C:plasma membrane"/>
    <property type="evidence" value="ECO:0007669"/>
    <property type="project" value="UniProtKB-SubCell"/>
</dbReference>
<dbReference type="GO" id="GO:0045259">
    <property type="term" value="C:proton-transporting ATP synthase complex"/>
    <property type="evidence" value="ECO:0007669"/>
    <property type="project" value="UniProtKB-KW"/>
</dbReference>
<dbReference type="GO" id="GO:0005524">
    <property type="term" value="F:ATP binding"/>
    <property type="evidence" value="ECO:0007669"/>
    <property type="project" value="UniProtKB-UniRule"/>
</dbReference>
<dbReference type="GO" id="GO:0046933">
    <property type="term" value="F:proton-transporting ATP synthase activity, rotational mechanism"/>
    <property type="evidence" value="ECO:0007669"/>
    <property type="project" value="UniProtKB-UniRule"/>
</dbReference>
<dbReference type="GO" id="GO:0042777">
    <property type="term" value="P:proton motive force-driven plasma membrane ATP synthesis"/>
    <property type="evidence" value="ECO:0007669"/>
    <property type="project" value="UniProtKB-UniRule"/>
</dbReference>
<dbReference type="CDD" id="cd12151">
    <property type="entry name" value="F1-ATPase_gamma"/>
    <property type="match status" value="1"/>
</dbReference>
<dbReference type="Gene3D" id="3.40.1380.10">
    <property type="match status" value="1"/>
</dbReference>
<dbReference type="Gene3D" id="1.10.287.80">
    <property type="entry name" value="ATP synthase, gamma subunit, helix hairpin domain"/>
    <property type="match status" value="1"/>
</dbReference>
<dbReference type="HAMAP" id="MF_00815">
    <property type="entry name" value="ATP_synth_gamma_bact"/>
    <property type="match status" value="1"/>
</dbReference>
<dbReference type="InterPro" id="IPR035968">
    <property type="entry name" value="ATP_synth_F1_ATPase_gsu"/>
</dbReference>
<dbReference type="InterPro" id="IPR000131">
    <property type="entry name" value="ATP_synth_F1_gsu"/>
</dbReference>
<dbReference type="InterPro" id="IPR023632">
    <property type="entry name" value="ATP_synth_F1_gsu_CS"/>
</dbReference>
<dbReference type="NCBIfam" id="TIGR01146">
    <property type="entry name" value="ATPsyn_F1gamma"/>
    <property type="match status" value="1"/>
</dbReference>
<dbReference type="NCBIfam" id="NF009956">
    <property type="entry name" value="PRK13422.1"/>
    <property type="match status" value="1"/>
</dbReference>
<dbReference type="PANTHER" id="PTHR11693">
    <property type="entry name" value="ATP SYNTHASE GAMMA CHAIN"/>
    <property type="match status" value="1"/>
</dbReference>
<dbReference type="PANTHER" id="PTHR11693:SF22">
    <property type="entry name" value="ATP SYNTHASE SUBUNIT GAMMA, MITOCHONDRIAL"/>
    <property type="match status" value="1"/>
</dbReference>
<dbReference type="Pfam" id="PF00231">
    <property type="entry name" value="ATP-synt"/>
    <property type="match status" value="1"/>
</dbReference>
<dbReference type="PRINTS" id="PR00126">
    <property type="entry name" value="ATPASEGAMMA"/>
</dbReference>
<dbReference type="SUPFAM" id="SSF52943">
    <property type="entry name" value="ATP synthase (F1-ATPase), gamma subunit"/>
    <property type="match status" value="1"/>
</dbReference>
<dbReference type="PROSITE" id="PS00153">
    <property type="entry name" value="ATPASE_GAMMA"/>
    <property type="match status" value="1"/>
</dbReference>
<proteinExistence type="inferred from homology"/>
<keyword id="KW-0066">ATP synthesis</keyword>
<keyword id="KW-0997">Cell inner membrane</keyword>
<keyword id="KW-1003">Cell membrane</keyword>
<keyword id="KW-0139">CF(1)</keyword>
<keyword id="KW-0375">Hydrogen ion transport</keyword>
<keyword id="KW-0406">Ion transport</keyword>
<keyword id="KW-0472">Membrane</keyword>
<keyword id="KW-0813">Transport</keyword>
<sequence>MSNAREIRSKVQSVKNTQKITGAMELVAASKMRGAIVKMNNVRPYVESANTIIKNVTMASIDYPNPYLFDREVKRVGYIVTSTDRGLCGGLNINLFKHVLKDIKKNLDDRVEVDVCAIGSKAATFFAKLIDVNVVATAHYNDKDNEGSIRAIRGALKVMLDRFTNGEIDRLYMSSNQFVSTIKQKPKLQTLLPIQDIFSKEELKTNKEQASKGHWDYIYERDIEEVLNALCIRYIEAQVRGAILENAACEQAARMMAMKNATDNASDIIDQLKLDYNKVRQAMITQELAEICSGAAAV</sequence>
<reference key="1">
    <citation type="submission" date="2007-12" db="EMBL/GenBank/DDBJ databases">
        <title>Complete sequence of chromosome of Francisella philomiragia subsp. philomiragia ATCC 25017.</title>
        <authorList>
            <consortium name="US DOE Joint Genome Institute"/>
            <person name="Copeland A."/>
            <person name="Lucas S."/>
            <person name="Lapidus A."/>
            <person name="Barry K."/>
            <person name="Detter J.C."/>
            <person name="Glavina del Rio T."/>
            <person name="Hammon N."/>
            <person name="Israni S."/>
            <person name="Dalin E."/>
            <person name="Tice H."/>
            <person name="Pitluck S."/>
            <person name="Chain P."/>
            <person name="Malfatti S."/>
            <person name="Shin M."/>
            <person name="Vergez L."/>
            <person name="Schmutz J."/>
            <person name="Larimer F."/>
            <person name="Land M."/>
            <person name="Hauser L."/>
            <person name="Richardson P."/>
        </authorList>
    </citation>
    <scope>NUCLEOTIDE SEQUENCE [LARGE SCALE GENOMIC DNA]</scope>
    <source>
        <strain>ATCC 25017 / CCUG 19701 / FSC 153 / O#319-036</strain>
    </source>
</reference>
<accession>B0TWS6</accession>
<protein>
    <recommendedName>
        <fullName evidence="1">ATP synthase gamma chain</fullName>
    </recommendedName>
    <alternativeName>
        <fullName evidence="1">ATP synthase F1 sector gamma subunit</fullName>
    </alternativeName>
    <alternativeName>
        <fullName evidence="1">F-ATPase gamma subunit</fullName>
    </alternativeName>
</protein>
<name>ATPG_FRAP2</name>
<evidence type="ECO:0000255" key="1">
    <source>
        <dbReference type="HAMAP-Rule" id="MF_00815"/>
    </source>
</evidence>